<proteinExistence type="inferred from homology"/>
<dbReference type="EC" id="2.7.2.15" evidence="1"/>
<dbReference type="EMBL" id="AE005174">
    <property type="protein sequence ID" value="AAG58246.1"/>
    <property type="status" value="ALT_INIT"/>
    <property type="molecule type" value="Genomic_DNA"/>
</dbReference>
<dbReference type="EMBL" id="BA000007">
    <property type="protein sequence ID" value="BAB37418.2"/>
    <property type="molecule type" value="Genomic_DNA"/>
</dbReference>
<dbReference type="PIR" id="B85973">
    <property type="entry name" value="B85973"/>
</dbReference>
<dbReference type="PIR" id="C91128">
    <property type="entry name" value="C91128"/>
</dbReference>
<dbReference type="RefSeq" id="NP_312022.2">
    <property type="nucleotide sequence ID" value="NC_002695.1"/>
</dbReference>
<dbReference type="RefSeq" id="WP_001301837.1">
    <property type="nucleotide sequence ID" value="NZ_VOAI01000009.1"/>
</dbReference>
<dbReference type="SMR" id="Q8XAF1"/>
<dbReference type="STRING" id="155864.Z4467"/>
<dbReference type="GeneID" id="916170"/>
<dbReference type="KEGG" id="ece:Z4467"/>
<dbReference type="KEGG" id="ecs:ECs_3995"/>
<dbReference type="PATRIC" id="fig|386585.9.peg.4169"/>
<dbReference type="eggNOG" id="COG0282">
    <property type="taxonomic scope" value="Bacteria"/>
</dbReference>
<dbReference type="HOGENOM" id="CLU_020352_0_1_6"/>
<dbReference type="OMA" id="QTMPEKN"/>
<dbReference type="UniPathway" id="UPA00052">
    <property type="reaction ID" value="UER00510"/>
</dbReference>
<dbReference type="Proteomes" id="UP000000558">
    <property type="component" value="Chromosome"/>
</dbReference>
<dbReference type="Proteomes" id="UP000002519">
    <property type="component" value="Chromosome"/>
</dbReference>
<dbReference type="GO" id="GO:0005829">
    <property type="term" value="C:cytosol"/>
    <property type="evidence" value="ECO:0007669"/>
    <property type="project" value="TreeGrafter"/>
</dbReference>
<dbReference type="GO" id="GO:0008776">
    <property type="term" value="F:acetate kinase activity"/>
    <property type="evidence" value="ECO:0007669"/>
    <property type="project" value="TreeGrafter"/>
</dbReference>
<dbReference type="GO" id="GO:0005524">
    <property type="term" value="F:ATP binding"/>
    <property type="evidence" value="ECO:0007669"/>
    <property type="project" value="UniProtKB-KW"/>
</dbReference>
<dbReference type="GO" id="GO:0046872">
    <property type="term" value="F:metal ion binding"/>
    <property type="evidence" value="ECO:0007669"/>
    <property type="project" value="UniProtKB-KW"/>
</dbReference>
<dbReference type="GO" id="GO:0008980">
    <property type="term" value="F:propionate kinase activity"/>
    <property type="evidence" value="ECO:0007669"/>
    <property type="project" value="UniProtKB-UniRule"/>
</dbReference>
<dbReference type="GO" id="GO:0006083">
    <property type="term" value="P:acetate metabolic process"/>
    <property type="evidence" value="ECO:0007669"/>
    <property type="project" value="TreeGrafter"/>
</dbReference>
<dbReference type="GO" id="GO:0070689">
    <property type="term" value="P:L-threonine catabolic process to propionate"/>
    <property type="evidence" value="ECO:0007669"/>
    <property type="project" value="UniProtKB-UniRule"/>
</dbReference>
<dbReference type="CDD" id="cd24010">
    <property type="entry name" value="ASKHA_NBD_AcK_PK"/>
    <property type="match status" value="1"/>
</dbReference>
<dbReference type="FunFam" id="3.30.420.40:FF:000165">
    <property type="entry name" value="Propionate kinase"/>
    <property type="match status" value="1"/>
</dbReference>
<dbReference type="Gene3D" id="3.30.420.40">
    <property type="match status" value="2"/>
</dbReference>
<dbReference type="HAMAP" id="MF_00020">
    <property type="entry name" value="Acetate_kinase"/>
    <property type="match status" value="1"/>
</dbReference>
<dbReference type="HAMAP" id="MF_01881">
    <property type="entry name" value="Propion_kin_subfam1"/>
    <property type="match status" value="1"/>
</dbReference>
<dbReference type="InterPro" id="IPR004372">
    <property type="entry name" value="Ac/propionate_kinase"/>
</dbReference>
<dbReference type="InterPro" id="IPR000890">
    <property type="entry name" value="Aliphatic_acid_kin_short-chain"/>
</dbReference>
<dbReference type="InterPro" id="IPR023865">
    <property type="entry name" value="Aliphatic_acid_kinase_CS"/>
</dbReference>
<dbReference type="InterPro" id="IPR043129">
    <property type="entry name" value="ATPase_NBD"/>
</dbReference>
<dbReference type="InterPro" id="IPR024917">
    <property type="entry name" value="Propionate_kinase"/>
</dbReference>
<dbReference type="NCBIfam" id="TIGR00016">
    <property type="entry name" value="ackA"/>
    <property type="match status" value="1"/>
</dbReference>
<dbReference type="NCBIfam" id="NF009045">
    <property type="entry name" value="PRK12379.1"/>
    <property type="match status" value="1"/>
</dbReference>
<dbReference type="PANTHER" id="PTHR21060">
    <property type="entry name" value="ACETATE KINASE"/>
    <property type="match status" value="1"/>
</dbReference>
<dbReference type="PANTHER" id="PTHR21060:SF17">
    <property type="entry name" value="PROPIONATE KINASE"/>
    <property type="match status" value="1"/>
</dbReference>
<dbReference type="Pfam" id="PF00871">
    <property type="entry name" value="Acetate_kinase"/>
    <property type="match status" value="1"/>
</dbReference>
<dbReference type="PIRSF" id="PIRSF000722">
    <property type="entry name" value="Acetate_prop_kin"/>
    <property type="match status" value="1"/>
</dbReference>
<dbReference type="PRINTS" id="PR00471">
    <property type="entry name" value="ACETATEKNASE"/>
</dbReference>
<dbReference type="SUPFAM" id="SSF53067">
    <property type="entry name" value="Actin-like ATPase domain"/>
    <property type="match status" value="2"/>
</dbReference>
<dbReference type="PROSITE" id="PS01075">
    <property type="entry name" value="ACETATE_KINASE_1"/>
    <property type="match status" value="1"/>
</dbReference>
<dbReference type="PROSITE" id="PS01076">
    <property type="entry name" value="ACETATE_KINASE_2"/>
    <property type="match status" value="1"/>
</dbReference>
<organism>
    <name type="scientific">Escherichia coli O157:H7</name>
    <dbReference type="NCBI Taxonomy" id="83334"/>
    <lineage>
        <taxon>Bacteria</taxon>
        <taxon>Pseudomonadati</taxon>
        <taxon>Pseudomonadota</taxon>
        <taxon>Gammaproteobacteria</taxon>
        <taxon>Enterobacterales</taxon>
        <taxon>Enterobacteriaceae</taxon>
        <taxon>Escherichia</taxon>
    </lineage>
</organism>
<reference key="1">
    <citation type="journal article" date="2001" name="Nature">
        <title>Genome sequence of enterohaemorrhagic Escherichia coli O157:H7.</title>
        <authorList>
            <person name="Perna N.T."/>
            <person name="Plunkett G. III"/>
            <person name="Burland V."/>
            <person name="Mau B."/>
            <person name="Glasner J.D."/>
            <person name="Rose D.J."/>
            <person name="Mayhew G.F."/>
            <person name="Evans P.S."/>
            <person name="Gregor J."/>
            <person name="Kirkpatrick H.A."/>
            <person name="Posfai G."/>
            <person name="Hackett J."/>
            <person name="Klink S."/>
            <person name="Boutin A."/>
            <person name="Shao Y."/>
            <person name="Miller L."/>
            <person name="Grotbeck E.J."/>
            <person name="Davis N.W."/>
            <person name="Lim A."/>
            <person name="Dimalanta E.T."/>
            <person name="Potamousis K."/>
            <person name="Apodaca J."/>
            <person name="Anantharaman T.S."/>
            <person name="Lin J."/>
            <person name="Yen G."/>
            <person name="Schwartz D.C."/>
            <person name="Welch R.A."/>
            <person name="Blattner F.R."/>
        </authorList>
    </citation>
    <scope>NUCLEOTIDE SEQUENCE [LARGE SCALE GENOMIC DNA]</scope>
    <source>
        <strain>O157:H7 / EDL933 / ATCC 700927 / EHEC</strain>
    </source>
</reference>
<reference key="2">
    <citation type="journal article" date="2001" name="DNA Res.">
        <title>Complete genome sequence of enterohemorrhagic Escherichia coli O157:H7 and genomic comparison with a laboratory strain K-12.</title>
        <authorList>
            <person name="Hayashi T."/>
            <person name="Makino K."/>
            <person name="Ohnishi M."/>
            <person name="Kurokawa K."/>
            <person name="Ishii K."/>
            <person name="Yokoyama K."/>
            <person name="Han C.-G."/>
            <person name="Ohtsubo E."/>
            <person name="Nakayama K."/>
            <person name="Murata T."/>
            <person name="Tanaka M."/>
            <person name="Tobe T."/>
            <person name="Iida T."/>
            <person name="Takami H."/>
            <person name="Honda T."/>
            <person name="Sasakawa C."/>
            <person name="Ogasawara N."/>
            <person name="Yasunaga T."/>
            <person name="Kuhara S."/>
            <person name="Shiba T."/>
            <person name="Hattori M."/>
            <person name="Shinagawa H."/>
        </authorList>
    </citation>
    <scope>NUCLEOTIDE SEQUENCE [LARGE SCALE GENOMIC DNA]</scope>
    <source>
        <strain>O157:H7 / Sakai / RIMD 0509952 / EHEC</strain>
    </source>
</reference>
<comment type="function">
    <text evidence="1">Catalyzes the conversion of propionyl phosphate and ADP to propionate and ATP.</text>
</comment>
<comment type="catalytic activity">
    <reaction evidence="1">
        <text>propanoate + ATP = propanoyl phosphate + ADP</text>
        <dbReference type="Rhea" id="RHEA:23148"/>
        <dbReference type="ChEBI" id="CHEBI:17272"/>
        <dbReference type="ChEBI" id="CHEBI:30616"/>
        <dbReference type="ChEBI" id="CHEBI:58933"/>
        <dbReference type="ChEBI" id="CHEBI:456216"/>
        <dbReference type="EC" id="2.7.2.15"/>
    </reaction>
</comment>
<comment type="cofactor">
    <cofactor evidence="1">
        <name>Mg(2+)</name>
        <dbReference type="ChEBI" id="CHEBI:18420"/>
    </cofactor>
</comment>
<comment type="pathway">
    <text evidence="1">Amino-acid degradation; L-threonine degradation via propanoate pathway; propanoate from L-threonine: step 4/4.</text>
</comment>
<comment type="subunit">
    <text evidence="1">Homodimer.</text>
</comment>
<comment type="similarity">
    <text evidence="1">Belongs to the acetokinase family. TdcD subfamily.</text>
</comment>
<comment type="sequence caution" evidence="2">
    <conflict type="erroneous initiation">
        <sequence resource="EMBL-CDS" id="AAG58246"/>
    </conflict>
    <text>Extended N-terminus.</text>
</comment>
<gene>
    <name evidence="1" type="primary">tdcD</name>
    <name type="ordered locus">Z4467</name>
    <name type="ordered locus">ECs3995</name>
</gene>
<feature type="chain" id="PRO_0000107653" description="Propionate kinase">
    <location>
        <begin position="1"/>
        <end position="402"/>
    </location>
</feature>
<feature type="active site" description="Proton donor/acceptor" evidence="1">
    <location>
        <position position="143"/>
    </location>
</feature>
<feature type="binding site" evidence="1">
    <location>
        <position position="11"/>
    </location>
    <ligand>
        <name>ATP</name>
        <dbReference type="ChEBI" id="CHEBI:30616"/>
    </ligand>
</feature>
<feature type="binding site" evidence="1">
    <location>
        <position position="11"/>
    </location>
    <ligand>
        <name>Mg(2+)</name>
        <dbReference type="ChEBI" id="CHEBI:18420"/>
    </ligand>
</feature>
<feature type="binding site" evidence="1">
    <location>
        <position position="18"/>
    </location>
    <ligand>
        <name>ATP</name>
        <dbReference type="ChEBI" id="CHEBI:30616"/>
    </ligand>
</feature>
<feature type="binding site" evidence="1">
    <location>
        <position position="86"/>
    </location>
    <ligand>
        <name>substrate</name>
    </ligand>
</feature>
<feature type="binding site" evidence="1">
    <location>
        <position position="175"/>
    </location>
    <ligand>
        <name>ATP</name>
        <dbReference type="ChEBI" id="CHEBI:30616"/>
    </ligand>
</feature>
<feature type="binding site" evidence="1">
    <location>
        <begin position="203"/>
        <end position="207"/>
    </location>
    <ligand>
        <name>ATP</name>
        <dbReference type="ChEBI" id="CHEBI:30616"/>
    </ligand>
</feature>
<feature type="binding site" evidence="1">
    <location>
        <begin position="278"/>
        <end position="280"/>
    </location>
    <ligand>
        <name>ATP</name>
        <dbReference type="ChEBI" id="CHEBI:30616"/>
    </ligand>
</feature>
<feature type="binding site" evidence="1">
    <location>
        <begin position="326"/>
        <end position="330"/>
    </location>
    <ligand>
        <name>ATP</name>
        <dbReference type="ChEBI" id="CHEBI:30616"/>
    </ligand>
</feature>
<feature type="site" description="Transition state stabilizer" evidence="1">
    <location>
        <position position="175"/>
    </location>
</feature>
<feature type="site" description="Transition state stabilizer" evidence="1">
    <location>
        <position position="236"/>
    </location>
</feature>
<sequence>MNEFPVVLVINCGSSSIKFSVLDASDCEVLMSGIADGINSENAFLSVNGGEPAPLAHHSYEGALKAIAFELEKRNLNDSVALIGHRIAHGGSIFTESAIITDEVIDNIRRVSPLAPLHNYANLSGIESAQQLFPGVTQVAVFDTSFHQTMAPEAYLYGLPWKYYEELGVRRYGFHGTSHRYVSLRAHSLLNLAEDDSGLVVAHLGNGASICAVRNGQSVDTSMGMTPLEGLMMGTRSGDVDFGAMSWVASQTNQSLGDLERVVNKESGLLGISGLSSDLRVLEKAWHEGHERAQLAIKTFVHRIARHIAGHAASLRRLDGIIFTGGIGENSSLIRRLVMEHLAVLGVEIDTEMNNRSNSFGERIVSSENARVICAVIPTNEEKMIALDAIHLGKVNAPAEFA</sequence>
<name>TDCD_ECO57</name>
<evidence type="ECO:0000255" key="1">
    <source>
        <dbReference type="HAMAP-Rule" id="MF_01881"/>
    </source>
</evidence>
<evidence type="ECO:0000305" key="2"/>
<accession>Q8XAF1</accession>
<protein>
    <recommendedName>
        <fullName evidence="1">Propionate kinase</fullName>
        <ecNumber evidence="1">2.7.2.15</ecNumber>
    </recommendedName>
</protein>
<keyword id="KW-0067">ATP-binding</keyword>
<keyword id="KW-0418">Kinase</keyword>
<keyword id="KW-0460">Magnesium</keyword>
<keyword id="KW-0479">Metal-binding</keyword>
<keyword id="KW-0547">Nucleotide-binding</keyword>
<keyword id="KW-1185">Reference proteome</keyword>
<keyword id="KW-0808">Transferase</keyword>